<accession>Q8SRY0</accession>
<name>RS6_ENCCU</name>
<comment type="PTM">
    <text evidence="1">Phosphorylated.</text>
</comment>
<comment type="similarity">
    <text evidence="2">Belongs to the eukaryotic ribosomal protein eS6 family.</text>
</comment>
<keyword id="KW-0002">3D-structure</keyword>
<keyword id="KW-0597">Phosphoprotein</keyword>
<keyword id="KW-1185">Reference proteome</keyword>
<keyword id="KW-0687">Ribonucleoprotein</keyword>
<keyword id="KW-0689">Ribosomal protein</keyword>
<dbReference type="EMBL" id="AL590445">
    <property type="protein sequence ID" value="CAD26586.2"/>
    <property type="molecule type" value="Genomic_DNA"/>
</dbReference>
<dbReference type="RefSeq" id="NP_597409.1">
    <property type="nucleotide sequence ID" value="NM_001041275.1"/>
</dbReference>
<dbReference type="PDB" id="7QEP">
    <property type="method" value="EM"/>
    <property type="resolution" value="2.70 A"/>
    <property type="chains" value="S6=1-217"/>
</dbReference>
<dbReference type="PDBsum" id="7QEP"/>
<dbReference type="EMDB" id="EMD-13936"/>
<dbReference type="SMR" id="Q8SRY0"/>
<dbReference type="FunCoup" id="Q8SRY0">
    <property type="interactions" value="288"/>
</dbReference>
<dbReference type="STRING" id="284813.Q8SRY0"/>
<dbReference type="GeneID" id="859074"/>
<dbReference type="KEGG" id="ecu:ECU05_0670"/>
<dbReference type="VEuPathDB" id="MicrosporidiaDB:ECU05_0670"/>
<dbReference type="HOGENOM" id="CLU_046346_3_0_1"/>
<dbReference type="InParanoid" id="Q8SRY0"/>
<dbReference type="OrthoDB" id="10260596at2759"/>
<dbReference type="Proteomes" id="UP000000819">
    <property type="component" value="Chromosome V"/>
</dbReference>
<dbReference type="GO" id="GO:1990904">
    <property type="term" value="C:ribonucleoprotein complex"/>
    <property type="evidence" value="ECO:0007669"/>
    <property type="project" value="UniProtKB-KW"/>
</dbReference>
<dbReference type="GO" id="GO:0005840">
    <property type="term" value="C:ribosome"/>
    <property type="evidence" value="ECO:0007669"/>
    <property type="project" value="UniProtKB-KW"/>
</dbReference>
<dbReference type="GO" id="GO:0003735">
    <property type="term" value="F:structural constituent of ribosome"/>
    <property type="evidence" value="ECO:0007669"/>
    <property type="project" value="InterPro"/>
</dbReference>
<dbReference type="GO" id="GO:0006412">
    <property type="term" value="P:translation"/>
    <property type="evidence" value="ECO:0007669"/>
    <property type="project" value="InterPro"/>
</dbReference>
<dbReference type="InterPro" id="IPR001377">
    <property type="entry name" value="Ribosomal_eS6"/>
</dbReference>
<dbReference type="InterPro" id="IPR014401">
    <property type="entry name" value="Ribosomal_eS6-like"/>
</dbReference>
<dbReference type="InterPro" id="IPR018282">
    <property type="entry name" value="Ribosomal_eS6_CS"/>
</dbReference>
<dbReference type="PANTHER" id="PTHR11502">
    <property type="entry name" value="40S RIBOSOMAL PROTEIN S6"/>
    <property type="match status" value="1"/>
</dbReference>
<dbReference type="Pfam" id="PF01092">
    <property type="entry name" value="Ribosomal_S6e"/>
    <property type="match status" value="1"/>
</dbReference>
<dbReference type="PIRSF" id="PIRSF002129">
    <property type="entry name" value="Ribosom_S6_euk"/>
    <property type="match status" value="1"/>
</dbReference>
<dbReference type="SMART" id="SM01405">
    <property type="entry name" value="Ribosomal_S6e"/>
    <property type="match status" value="1"/>
</dbReference>
<dbReference type="PROSITE" id="PS00578">
    <property type="entry name" value="RIBOSOMAL_S6E"/>
    <property type="match status" value="1"/>
</dbReference>
<protein>
    <recommendedName>
        <fullName evidence="2">Small ribosomal subunit protein eS6</fullName>
    </recommendedName>
    <alternativeName>
        <fullName>40S ribosomal protein S6</fullName>
    </alternativeName>
</protein>
<evidence type="ECO:0000250" key="1"/>
<evidence type="ECO:0000305" key="2"/>
<organism>
    <name type="scientific">Encephalitozoon cuniculi (strain GB-M1)</name>
    <name type="common">Microsporidian parasite</name>
    <dbReference type="NCBI Taxonomy" id="284813"/>
    <lineage>
        <taxon>Eukaryota</taxon>
        <taxon>Fungi</taxon>
        <taxon>Fungi incertae sedis</taxon>
        <taxon>Microsporidia</taxon>
        <taxon>Unikaryonidae</taxon>
        <taxon>Encephalitozoon</taxon>
    </lineage>
</organism>
<reference key="1">
    <citation type="journal article" date="2001" name="Nature">
        <title>Genome sequence and gene compaction of the eukaryote parasite Encephalitozoon cuniculi.</title>
        <authorList>
            <person name="Katinka M.D."/>
            <person name="Duprat S."/>
            <person name="Cornillot E."/>
            <person name="Metenier G."/>
            <person name="Thomarat F."/>
            <person name="Prensier G."/>
            <person name="Barbe V."/>
            <person name="Peyretaillade E."/>
            <person name="Brottier P."/>
            <person name="Wincker P."/>
            <person name="Delbac F."/>
            <person name="El Alaoui H."/>
            <person name="Peyret P."/>
            <person name="Saurin W."/>
            <person name="Gouy M."/>
            <person name="Weissenbach J."/>
            <person name="Vivares C.P."/>
        </authorList>
    </citation>
    <scope>NUCLEOTIDE SEQUENCE [LARGE SCALE GENOMIC DNA]</scope>
    <source>
        <strain>GB-M1</strain>
    </source>
</reference>
<reference key="2">
    <citation type="journal article" date="2009" name="BMC Genomics">
        <title>Identification of transcriptional signals in Encephalitozoon cuniculi widespread among Microsporidia phylum: support for accurate structural genome annotation.</title>
        <authorList>
            <person name="Peyretaillade E."/>
            <person name="Goncalves O."/>
            <person name="Terrat S."/>
            <person name="Dugat-Bony E."/>
            <person name="Wincker P."/>
            <person name="Cornman R.S."/>
            <person name="Evans J.D."/>
            <person name="Delbac F."/>
            <person name="Peyret P."/>
        </authorList>
    </citation>
    <scope>GENOME REANNOTATION</scope>
    <source>
        <strain>GB-M1</strain>
    </source>
</reference>
<gene>
    <name type="primary">RPS6</name>
    <name type="ordered locus">ECU05_0670</name>
</gene>
<feature type="chain" id="PRO_0000137336" description="Small ribosomal subunit protein eS6">
    <location>
        <begin position="1"/>
        <end position="217"/>
    </location>
</feature>
<sequence>MKLNIAYPTNGTQKMFEIERRNEVRLYDKKIGDQFDGGILGEEFEGTIMEITGGDDYQGFPMVSGHLTKKRVRPLLSKGDAGYRCRRKGVRRRKSVRGSIVSEEICVLNLIILRPGEKEIDGLTNAVNDVSHLPRKEKKLRKMFGVPDEEKNVVGYIRNILKSECDDPKKIPKIRHNGKRMKREQERREQIMKIRLERKRILEEERKEYLEKYFNKA</sequence>
<proteinExistence type="evidence at protein level"/>